<reference key="1">
    <citation type="journal article" date="1989" name="Mol. Gen. Genet.">
        <title>Genetic and structural characterization of the avirulence gene avrBs3 from Xanthomonas campestris pv. vesicatoria.</title>
        <authorList>
            <person name="Bonas U."/>
            <person name="Stall R.E."/>
            <person name="Staskawicz B."/>
        </authorList>
    </citation>
    <scope>NUCLEOTIDE SEQUENCE [GENOMIC DNA]</scope>
    <scope>REPEAT</scope>
    <source>
        <strain>Isolate 71-21</strain>
    </source>
</reference>
<reference key="2">
    <citation type="submission" date="1991-07" db="EMBL/GenBank/DDBJ databases">
        <authorList>
            <person name="Bonas U."/>
        </authorList>
    </citation>
    <scope>SEQUENCE REVISION</scope>
</reference>
<reference key="3">
    <citation type="journal article" date="1992" name="Nature">
        <title>Race-specificity of plant resistance to bacterial spot disease determined by repetitive motifs in a bacterial virulence protein.</title>
        <authorList>
            <person name="Herbers K."/>
            <person name="Conrads-Strauch J."/>
            <person name="Bonas U."/>
        </authorList>
    </citation>
    <scope>FUNCTION</scope>
    <scope>DOMAIN</scope>
</reference>
<reference key="4">
    <citation type="journal article" date="1996" name="Cell">
        <title>Recognition of the bacterial avirulence protein AvrBs3 occurs inside the host plant cell.</title>
        <authorList>
            <person name="Van den Ackerveken G."/>
            <person name="Marois E."/>
            <person name="Bonas U."/>
        </authorList>
    </citation>
    <scope>FUNCTION</scope>
    <scope>SUBCELLULAR LOCATION</scope>
    <scope>DOMAIN</scope>
    <scope>MUTAGENESIS OF LYS-1021; LYS-1067; 1067-ARG--PRO-1106; SER-1069; LYS-1104 AND PRO-1106</scope>
</reference>
<reference key="5">
    <citation type="journal article" date="1999" name="Proc. Natl. Acad. Sci. U.S.A.">
        <title>The Xanthomonas Hrp type III system secretes proteins from plant and mammalian bacterial pathogens.</title>
        <authorList>
            <person name="Rossier O."/>
            <person name="Wengelnik K."/>
            <person name="Hahn K."/>
            <person name="Bonas U."/>
        </authorList>
    </citation>
    <scope>SUBCELLULAR LOCATION</scope>
    <source>
        <strain>82-8</strain>
    </source>
</reference>
<reference key="6">
    <citation type="journal article" date="1998" name="Mol. Plant Microbe Interact.">
        <title>AvrXa10 contains an acidic transcriptional activation domain in the functionally conserved C terminus.</title>
        <authorList>
            <person name="Zhu W.G."/>
            <person name="Yang B."/>
            <person name="Chittoor J.M."/>
            <person name="Johnson L.B."/>
            <person name="White F.F."/>
        </authorList>
    </citation>
    <scope>ACTIVATION DOMAIN</scope>
</reference>
<reference key="7">
    <citation type="journal article" date="2001" name="Plant J.">
        <title>Eukaryotic features of the Xanthomonas type III effector AvrBs3: protein domains involved in transcriptional activation and the interaction with nuclear import receptors from pepper.</title>
        <authorList>
            <person name="Szurek B."/>
            <person name="Marois E."/>
            <person name="Bonas U."/>
            <person name="Van den Ackerveken G."/>
        </authorList>
    </citation>
    <scope>INTERACTION WITH CAIMP ALPHA-1 AND CAIMP ALPHA-2</scope>
    <scope>SUBUNIT</scope>
    <scope>DOMAIN</scope>
    <scope>SUBCELLULAR LOCATION</scope>
    <scope>MUTAGENESIS OF 1117-PRO--GLU-1153</scope>
</reference>
<reference key="8">
    <citation type="journal article" date="2002" name="Mol. Microbiol.">
        <title>Type III-dependent translocation of the Xanthomonas AvrBs3 protein into the plant cell.</title>
        <authorList>
            <person name="Szurek B."/>
            <person name="Rossier O."/>
            <person name="Hause G."/>
            <person name="Bonas U."/>
        </authorList>
    </citation>
    <scope>SUBCELLULAR LOCATION</scope>
    <scope>DOMAIN</scope>
    <scope>MUTAGENESIS OF 3-PRO--THR-27</scope>
</reference>
<reference key="9">
    <citation type="journal article" date="2002" name="Mol. Plant Microbe Interact.">
        <title>The xanthomonas type III effector protein AvrBs3 modulates plant gene expression and induces cell hypertrophy in the susceptible host.</title>
        <authorList>
            <person name="Marois E."/>
            <person name="Van den Ackerveken G."/>
            <person name="Bonas U."/>
        </authorList>
    </citation>
    <scope>FUNCTION</scope>
</reference>
<reference key="10">
    <citation type="journal article" date="2005" name="Plant J.">
        <title>Dimerization of the bacterial effector protein AvrBs3 in the plant cell cytoplasm prior to nuclear import.</title>
        <authorList>
            <person name="Guerlebeck D."/>
            <person name="Szurek B."/>
            <person name="Bonas U."/>
        </authorList>
    </citation>
    <scope>SUBUNIT</scope>
    <scope>SUBCELLULAR LOCATION</scope>
</reference>
<reference key="11">
    <citation type="journal article" date="2007" name="Science">
        <title>Plant pathogen recognition mediated by promoter activation of the pepper Bs3 resistance gene.</title>
        <authorList>
            <person name="Romer P."/>
            <person name="Hahn S."/>
            <person name="Jordan T."/>
            <person name="Strauss T."/>
            <person name="Bonas U."/>
            <person name="Lahaye T."/>
        </authorList>
    </citation>
    <scope>FUNCTION</scope>
    <scope>DNA-BINDING</scope>
</reference>
<reference key="12">
    <citation type="journal article" date="2007" name="Science">
        <title>A bacterial effector acts as a plant transcription factor and induces a cell size regulator.</title>
        <authorList>
            <person name="Kay S."/>
            <person name="Hahn S."/>
            <person name="Marois E."/>
            <person name="Hause G."/>
            <person name="Bonas U."/>
        </authorList>
    </citation>
    <scope>FUNCTION</scope>
    <scope>DNA-BINDING</scope>
</reference>
<reference key="13">
    <citation type="journal article" date="2009" name="Science">
        <title>Breaking the code of DNA binding specificity of TAL-type III effectors.</title>
        <authorList>
            <person name="Boch J."/>
            <person name="Scholze H."/>
            <person name="Schornack S."/>
            <person name="Landgraf A."/>
            <person name="Hahn S."/>
            <person name="Kay S."/>
            <person name="Lahaye T."/>
            <person name="Nickstadt A."/>
            <person name="Bonas U."/>
        </authorList>
    </citation>
    <scope>FUNCTION IN DNA RECOGNITION</scope>
    <scope>DOMAIN</scope>
    <scope>BIOTECHNOLOGY</scope>
    <scope>DNA-BINDING</scope>
</reference>
<reference key="14">
    <citation type="journal article" date="2009" name="Science">
        <title>A simple cipher governs DNA recognition by TAL effectors.</title>
        <authorList>
            <person name="Moscou M.J."/>
            <person name="Bogdanove A.J."/>
        </authorList>
    </citation>
    <scope>FUNCTION IN DNA RECOGNITION</scope>
</reference>
<reference key="15">
    <citation type="journal article" date="2010" name="Genetics">
        <title>Targeting DNA double-strand breaks with TAL effector nucleases.</title>
        <authorList>
            <person name="Christian M."/>
            <person name="Cermak T."/>
            <person name="Doyle E.L."/>
            <person name="Schmidt C."/>
            <person name="Zhang F."/>
            <person name="Hummel A."/>
            <person name="Bogdanove A.J."/>
            <person name="Voytas D.F."/>
        </authorList>
    </citation>
    <scope>BIOTECHNOLOGY</scope>
</reference>
<reference key="16">
    <citation type="journal article" date="2014" name="Biochem. J.">
        <title>TALEN-mediated genome editing: prospects and perspectives.</title>
        <authorList>
            <person name="Wright D.A."/>
            <person name="Li T."/>
            <person name="Yang B."/>
            <person name="Spalding M.H."/>
        </authorList>
    </citation>
    <scope>BIOTECHNOLOGY USES REVIEW</scope>
</reference>
<reference key="17">
    <citation type="journal article" date="2014" name="Plant J.">
        <title>From dead leaf, to new life: TAL effectors as tools for synthetic biology.</title>
        <authorList>
            <person name="de Lange O."/>
            <person name="Binder A."/>
            <person name="Lahaye T."/>
        </authorList>
    </citation>
    <scope>BIOTECHNOLOGY USES REVIEW</scope>
</reference>
<reference key="18">
    <citation type="journal article" date="2013" name="Acta Crystallogr. D">
        <title>Structure of the AvrBs3-DNA complex provides new insights into the initial thymine-recognition mechanism.</title>
        <authorList>
            <person name="Stella S."/>
            <person name="Molina R."/>
            <person name="Yefimenko I."/>
            <person name="Prieto J."/>
            <person name="Silva G."/>
            <person name="Bertonati C."/>
            <person name="Juillerat A."/>
            <person name="Duchateau P."/>
            <person name="Montoya G."/>
        </authorList>
    </citation>
    <scope>X-RAY CRYSTALLOGRAPHY (2.55 ANGSTROMS) OF 153-897 IN COMPLEX WITH DNA</scope>
    <scope>DOMAIN</scope>
    <scope>DNA-BINDING</scope>
</reference>
<comment type="function">
    <text evidence="4 7 8 9 10 13 15">Avirulence protein. Acts as a transcription factor in C.annuum plants. In susceptible plants lacking the Bs3 resistance gene induces expression of a number of genes, including genes homologous to a family of auxin-induced genes, alpha-expansin genes, pectate lyase, anthocyanidin glucoside rhamnosyl transferase and at least one transcription factor, UPA20. Their expression leads to plant hypertrophy in mesophyll cells, probably mainly mediated by UPA20 (PubMed:17962565). In resistant plants induces the hypersensitive response (HR), by inducing transcription of plant Bs3 which induces HR; a mutated AvrBs3 missing repeats 11-14 does not induce expression of Bs3 but does induce Bs3-E, a Bs3 allele with a modified promoter (PubMed:17962564). Binds DNA corresponding to the upa-box in sequence-specific manner.</text>
</comment>
<comment type="subunit">
    <text evidence="3 6">Forms a homodimer in the plant cell cytoplasm, prior to nuclear import. Interacts with the plant cell importin alpha-1 (Caimp alpha-1) and importin alpha-2 (Caimp alpha-2) via the nuclear localization signal NLS2, but not via NLS3.</text>
</comment>
<comment type="subcellular location">
    <subcellularLocation>
        <location evidence="2 3 5 6 13">Secreted</location>
    </subcellularLocation>
    <subcellularLocation>
        <location evidence="5">Host nucleus</location>
    </subcellularLocation>
    <text evidence="2 5 13">Secreted via type III secretion system (T3SS) (PubMed:10430949, PubMed:12366827). Localizes to the plant cell nucleus in both susceptible (bs3) and resistant (Bs3) plants (PubMed:12366827).</text>
</comment>
<comment type="domain">
    <text evidence="5">The N-terminus is responsible for protein export from the bacteria.</text>
</comment>
<comment type="domain">
    <text evidence="10 12 14 15 17 19">The central DNA-binding region is composed of 17.5 tandem core repeats with 1 base-specifying residue (BSR residue 13, also called repeat variable diresidue, RVD, residues 12 and 13) which recognizes 1 base in the target DNA; 10.5 or more repeats are required for strong gene expression (tested using an artificial TALE, PubMed:19933107). The BSR is the only residue which contacts DNA in a sequence-specific manner (PubMed:23999294). The number and order of core repeats determines its specificity for different resistance alleles in plants. Deleting and/or swapping core repeats alters the interplay between bacterial avirulence and plant resistance genes. Replacement with repeat domains from other proteins (AvrXa7 or AvrXa10 of X.oryzae pv. oryzae (AC Q56830)) does not elicit the HR in susceptible plants (PubMed:9675896).</text>
</comment>
<comment type="domain">
    <text evidence="13">An intact NLS2 or NLS3 is required for the plant HR response, whereas NLS1 plays a minor role. Replacement of NLS1-NLS3 or NLS2-NLS3 (residues 1021-1106 or 1067-1106) with the large T-antigen NLS from the SV40 virus fully restores HR activity.</text>
</comment>
<comment type="domain">
    <text evidence="3 22">The activation domain is necessary for activity in planta.</text>
</comment>
<comment type="biotechnology">
    <text evidence="10 11 19 20">By varying the BSR in each core repeat, DNA-binding domains can be generated that target specific DNA sequences and thus act as transcription factors (PubMed:19933107). By combining the central DNA-binding domain with the catalytic domain of the restriction endonuclease FokI, TALE-nuclease (TALEN) enzymes able to target specific dsDNA sequences can be created that enable eukaryotic genome modification (PubMed:20660643). Other potential uses as transcriptional repressors, for transposon targeting, DNA methylation or histone tail modifictions are also possible.</text>
</comment>
<comment type="similarity">
    <text evidence="23">Belongs to the transcription activator-like effector (TALE) family.</text>
</comment>
<sequence>MDPIRSRTPSPARELLPGPQPDGVQPTADRGVSPPAGGPLDGLPARRTMSRTRLPSPPAPSPAFSAGSFSDLLRQFDPSLFNTSLFDSLPPFGAHHTEAATGEWDEVQSGLRAADAPPPTMRVAVTAARPPRAKPAPRRRAAQPSDASPAAQVDLRTLGYSQQQQEKIKPKVRSTVAQHHEALVGHGFTHAHIVALSQHPAALGTVAVKYQDMIAALPEATHEAIVGVGKQWSGARALEALLTVAGELRGPPLQLDTGQLLKIAKRGGVTAVEAVHAWRNALTGAPLNLTPEQVVAIASHDGGKQALETVQRLLPVLCQAHGLTPQQVVAIASNGGGKQALETVQRLLPVLCQAHGLTPQQVVAIASNSGGKQALETVQRLLPVLCQAHGLTPEQVVAIASNGGGKQALETVQRLLPVLCQAHGLTPEQVVAIASNIGGKQALETVQALLPVLCQAHGLTPEQVVAIASNIGGKQALETVQALLPVLCQAHGLTPEQVVAIASNIGGKQALETVQALLPVLCQAHGLTPEQVVAIASHDGGKQALETVQRLLPVLCQAHGLTPEQVVAIASHDGGKQALETVQRLLPVLCQAHGLTPQQVVAIASNGGGKQALETVQRLLPVLCQAHGLTPEQVVAIASNSGGKQALETVQALLPVLCQAHGLTPEQVVAIASNSGGKQALETVQRLLPVLCQAHGLTPEQVVAIASHDGGKQALETVQRLLPVLCQAHGLTPEQVVAIASHDGGKQALETVQRLLPVLCQAHGLTPEQVVAIASHDGGKQALETVQRLLPVLCQAHGLTPQQVVAIASNGGGRPALETVQRLLPVLCQAHGLTPEQVVAIASHDGGKQALETVQRLLPVLCQAHGLTPQQVVAIASNGGGRPALESIVAQLSRPDPALAALTNDHLVALACLGGRPALDAVKKGLPHAPALIKRTNRRIPERTSHRVADHAQVVRVLGFFQCHSHPAQAFDDAMTQFGMSRHGLLQLFRRVGVTELEARSGTLPPASQRWDRILQASGMKRAKPSPTSTQTPDQASLHAFADSLERDLDAPSPMHEGDQTRASSRKRSRSDRAVTGPSAQQSFEVRVPEQRDALHLPLSWRVKRPRTSIGGGLPDPGTPTAADLAASSTVMREQDEDPFAGAADDFPAFNEEELAWLMELLPQ</sequence>
<name>AVRB3_XANEU</name>
<proteinExistence type="evidence at protein level"/>
<evidence type="ECO:0000256" key="1">
    <source>
        <dbReference type="SAM" id="MobiDB-lite"/>
    </source>
</evidence>
<evidence type="ECO:0000269" key="2">
    <source>
    </source>
</evidence>
<evidence type="ECO:0000269" key="3">
    <source>
    </source>
</evidence>
<evidence type="ECO:0000269" key="4">
    <source>
    </source>
</evidence>
<evidence type="ECO:0000269" key="5">
    <source>
    </source>
</evidence>
<evidence type="ECO:0000269" key="6">
    <source>
    </source>
</evidence>
<evidence type="ECO:0000269" key="7">
    <source>
    </source>
</evidence>
<evidence type="ECO:0000269" key="8">
    <source>
    </source>
</evidence>
<evidence type="ECO:0000269" key="9">
    <source>
    </source>
</evidence>
<evidence type="ECO:0000269" key="10">
    <source>
    </source>
</evidence>
<evidence type="ECO:0000269" key="11">
    <source>
    </source>
</evidence>
<evidence type="ECO:0000269" key="12">
    <source>
    </source>
</evidence>
<evidence type="ECO:0000269" key="13">
    <source>
    </source>
</evidence>
<evidence type="ECO:0000269" key="14">
    <source>
    </source>
</evidence>
<evidence type="ECO:0000269" key="15">
    <source ref="3"/>
</evidence>
<evidence type="ECO:0000303" key="16">
    <source>
    </source>
</evidence>
<evidence type="ECO:0000303" key="17">
    <source>
    </source>
</evidence>
<evidence type="ECO:0000303" key="18">
    <source>
    </source>
</evidence>
<evidence type="ECO:0000303" key="19">
    <source>
    </source>
</evidence>
<evidence type="ECO:0000303" key="20">
    <source>
    </source>
</evidence>
<evidence type="ECO:0000303" key="21">
    <source>
    </source>
</evidence>
<evidence type="ECO:0000303" key="22">
    <source>
    </source>
</evidence>
<evidence type="ECO:0000305" key="23"/>
<gene>
    <name type="primary">avrBs3</name>
</gene>
<accession>P14727</accession>
<dbReference type="EMBL" id="X16130">
    <property type="protein sequence ID" value="CAA34257.1"/>
    <property type="molecule type" value="Genomic_DNA"/>
</dbReference>
<dbReference type="PIR" id="JQ0316">
    <property type="entry name" value="JQ0316"/>
</dbReference>
<dbReference type="RefSeq" id="WP_032488475.1">
    <property type="nucleotide sequence ID" value="NZ_CP170255.1"/>
</dbReference>
<dbReference type="PDB" id="2YPF">
    <property type="method" value="X-ray"/>
    <property type="resolution" value="2.55 A"/>
    <property type="chains" value="A=153-897"/>
</dbReference>
<dbReference type="PDBsum" id="2YPF"/>
<dbReference type="SMR" id="P14727"/>
<dbReference type="PHI-base" id="PHI:7758"/>
<dbReference type="GO" id="GO:0005576">
    <property type="term" value="C:extracellular region"/>
    <property type="evidence" value="ECO:0000314"/>
    <property type="project" value="UniProtKB"/>
</dbReference>
<dbReference type="GO" id="GO:0042025">
    <property type="term" value="C:host cell nucleus"/>
    <property type="evidence" value="ECO:0000314"/>
    <property type="project" value="UniProtKB"/>
</dbReference>
<dbReference type="GO" id="GO:0043565">
    <property type="term" value="F:sequence-specific DNA binding"/>
    <property type="evidence" value="ECO:0000314"/>
    <property type="project" value="UniProtKB"/>
</dbReference>
<dbReference type="GO" id="GO:0052040">
    <property type="term" value="P:symbiont-mediated perturbation of host programmed cell death"/>
    <property type="evidence" value="ECO:0000314"/>
    <property type="project" value="UniProtKB"/>
</dbReference>
<dbReference type="GO" id="GO:0052026">
    <property type="term" value="P:symbiont-mediated perturbation of host transcription"/>
    <property type="evidence" value="ECO:0000314"/>
    <property type="project" value="UniProtKB"/>
</dbReference>
<dbReference type="Gene3D" id="6.10.140.500">
    <property type="match status" value="9"/>
</dbReference>
<dbReference type="InterPro" id="IPR005042">
    <property type="entry name" value="TAL_effector_rpt"/>
</dbReference>
<dbReference type="InterPro" id="IPR053450">
    <property type="entry name" value="TALE"/>
</dbReference>
<dbReference type="NCBIfam" id="NF041308">
    <property type="entry name" value="AvrBs3"/>
    <property type="match status" value="1"/>
</dbReference>
<dbReference type="Pfam" id="PF03377">
    <property type="entry name" value="TAL_effector"/>
    <property type="match status" value="19"/>
</dbReference>
<feature type="chain" id="PRO_0000066138" description="Avirulence protein AvrBs3">
    <location>
        <begin position="1"/>
        <end position="1164"/>
    </location>
</feature>
<feature type="repeat" description="Cryptic repeat -1" evidence="18">
    <location>
        <begin position="225"/>
        <end position="254"/>
    </location>
</feature>
<feature type="repeat" description="Cryptic repeat 0" evidence="18">
    <location>
        <begin position="255"/>
        <end position="288"/>
    </location>
</feature>
<feature type="repeat" description="Core repeat 1" evidence="21">
    <location>
        <begin position="289"/>
        <end position="322"/>
    </location>
</feature>
<feature type="repeat" description="Core repeat 2" evidence="21">
    <location>
        <begin position="323"/>
        <end position="356"/>
    </location>
</feature>
<feature type="repeat" description="Core repeat 3" evidence="21">
    <location>
        <begin position="357"/>
        <end position="390"/>
    </location>
</feature>
<feature type="repeat" description="Core repeat 4" evidence="21">
    <location>
        <begin position="391"/>
        <end position="424"/>
    </location>
</feature>
<feature type="repeat" description="Core repeat 5" evidence="21">
    <location>
        <begin position="425"/>
        <end position="458"/>
    </location>
</feature>
<feature type="repeat" description="Core repeat 6" evidence="21">
    <location>
        <begin position="459"/>
        <end position="492"/>
    </location>
</feature>
<feature type="repeat" description="Core repeat 7" evidence="21">
    <location>
        <begin position="493"/>
        <end position="526"/>
    </location>
</feature>
<feature type="repeat" description="Core repeat 8" evidence="21">
    <location>
        <begin position="527"/>
        <end position="560"/>
    </location>
</feature>
<feature type="repeat" description="Core repeat 9" evidence="21">
    <location>
        <begin position="561"/>
        <end position="594"/>
    </location>
</feature>
<feature type="repeat" description="Core repeat 10" evidence="21">
    <location>
        <begin position="595"/>
        <end position="628"/>
    </location>
</feature>
<feature type="repeat" description="Core repeat 11" evidence="21">
    <location>
        <begin position="629"/>
        <end position="662"/>
    </location>
</feature>
<feature type="repeat" description="Core repeat 12" evidence="21">
    <location>
        <begin position="663"/>
        <end position="696"/>
    </location>
</feature>
<feature type="repeat" description="Core repeat 13" evidence="21">
    <location>
        <begin position="697"/>
        <end position="730"/>
    </location>
</feature>
<feature type="repeat" description="Core repeat 14" evidence="21">
    <location>
        <begin position="731"/>
        <end position="764"/>
    </location>
</feature>
<feature type="repeat" description="Core repeat 15" evidence="21">
    <location>
        <begin position="765"/>
        <end position="798"/>
    </location>
</feature>
<feature type="repeat" description="Core repeat 16" evidence="21">
    <location>
        <begin position="799"/>
        <end position="832"/>
    </location>
</feature>
<feature type="repeat" description="Core repeat 17" evidence="21">
    <location>
        <begin position="833"/>
        <end position="866"/>
    </location>
</feature>
<feature type="repeat" description="Core repeat 17.5" evidence="21">
    <location>
        <begin position="867"/>
        <end position="886"/>
    </location>
</feature>
<feature type="region of interest" description="Disordered" evidence="1">
    <location>
        <begin position="1"/>
        <end position="68"/>
    </location>
</feature>
<feature type="region of interest" description="Disordered" evidence="1">
    <location>
        <begin position="128"/>
        <end position="152"/>
    </location>
</feature>
<feature type="region of interest" description="Disordered" evidence="1">
    <location>
        <begin position="1048"/>
        <end position="1091"/>
    </location>
</feature>
<feature type="region of interest" description="Acidic activation domain AAD" evidence="16 22">
    <location>
        <begin position="1135"/>
        <end position="1164"/>
    </location>
</feature>
<feature type="short sequence motif" description="Nuclear localization signal NLS1" evidence="13">
    <location>
        <begin position="1021"/>
        <end position="1024"/>
    </location>
</feature>
<feature type="short sequence motif" description="Nuclear localization signal NLS2" evidence="13">
    <location>
        <begin position="1067"/>
        <end position="1070"/>
    </location>
</feature>
<feature type="short sequence motif" description="Nuclear localization signal NLS3" evidence="13">
    <location>
        <begin position="1104"/>
        <end position="1107"/>
    </location>
</feature>
<feature type="compositionally biased region" description="Basic residues" evidence="1">
    <location>
        <begin position="131"/>
        <end position="141"/>
    </location>
</feature>
<feature type="compositionally biased region" description="Low complexity" evidence="1">
    <location>
        <begin position="142"/>
        <end position="151"/>
    </location>
</feature>
<feature type="compositionally biased region" description="Basic and acidic residues" evidence="1">
    <location>
        <begin position="1048"/>
        <end position="1060"/>
    </location>
</feature>
<feature type="mutagenesis site" description="Loss of protein secretion, loss of hypersensitive response (HR) activity in planta." evidence="5">
    <location>
        <begin position="3"/>
        <end position="27"/>
    </location>
</feature>
<feature type="mutagenesis site" description="No loss of HR activity. No loss of HR activity; when associated with T-1067 and A-1069, or with T-1104 and A-1106. Reduced HR activity when associated with T-1067; A-1069; T-1104 and A-1106." evidence="13">
    <original>K</original>
    <variation>T</variation>
    <location>
        <position position="1021"/>
    </location>
</feature>
<feature type="mutagenesis site" description="Complete loss of HR activity (loss of NLS2 and NLS3)." evidence="13">
    <original>KRSRSDRAVTGPSAQQSFEVRVPEQRDALHLPLSWRVKRP</original>
    <variation>TA</variation>
    <location>
        <begin position="1067"/>
        <end position="1106"/>
    </location>
</feature>
<feature type="mutagenesis site" description="No loss of HR activity; when associated with A-1069, or with T-1021 and A-1069. Reduced HR activity when associated with A-1069; T-1104 and A-1106, or with T-1021; A-1069; T-1104 and A-1106." evidence="13">
    <original>K</original>
    <variation>T</variation>
    <location>
        <position position="1067"/>
    </location>
</feature>
<feature type="mutagenesis site" description="No loss of HR activity; when associated with T-1067, or with T-1021 and T-1067. Reduced HR activity when associated with T-1067; T-1104 and A-1106, or with T-1021; T-1067; T-1104 and A-1106." evidence="13">
    <original>S</original>
    <variation>A</variation>
    <location>
        <position position="1069"/>
    </location>
</feature>
<feature type="mutagenesis site" description="No loss of HR activity; when associated with A-1106, or with T-1021 and A-1106. Reduced HR activity when associated with T-1067; A-1069 and A-1106, or with T-1021; T-1067; A-1069; and A-1106." evidence="13">
    <original>K</original>
    <variation>T</variation>
    <location>
        <position position="1104"/>
    </location>
</feature>
<feature type="mutagenesis site" description="No loss of HR activity; when associated with T-1104, or with T-1021 and T-1104. Reduced HR activity when associated with T-1067; A-1069 and T-1104, or with T-1021; T-1067; A-1069; and T-1104." evidence="13">
    <original>P</original>
    <variation>A</variation>
    <location>
        <position position="1106"/>
    </location>
</feature>
<feature type="mutagenesis site" description="Loss of HR activity (loss of AAD)." evidence="3">
    <original>PGTPTAADLAASSTVMREQDEDPFAGAADDFPAFNEE</original>
    <variation>L</variation>
    <location>
        <begin position="1117"/>
        <end position="1153"/>
    </location>
</feature>
<keyword id="KW-0002">3D-structure</keyword>
<keyword id="KW-0238">DNA-binding</keyword>
<keyword id="KW-1048">Host nucleus</keyword>
<keyword id="KW-0928">Hypersensitive response elicitation</keyword>
<keyword id="KW-0614">Plasmid</keyword>
<keyword id="KW-0677">Repeat</keyword>
<keyword id="KW-0964">Secreted</keyword>
<keyword id="KW-0804">Transcription</keyword>
<keyword id="KW-0805">Transcription regulation</keyword>
<keyword id="KW-0843">Virulence</keyword>
<geneLocation type="plasmid">
    <name>pXV11</name>
</geneLocation>
<organism>
    <name type="scientific">Xanthomonas euvesicatoria</name>
    <dbReference type="NCBI Taxonomy" id="456327"/>
    <lineage>
        <taxon>Bacteria</taxon>
        <taxon>Pseudomonadati</taxon>
        <taxon>Pseudomonadota</taxon>
        <taxon>Gammaproteobacteria</taxon>
        <taxon>Lysobacterales</taxon>
        <taxon>Lysobacteraceae</taxon>
        <taxon>Xanthomonas</taxon>
    </lineage>
</organism>
<protein>
    <recommendedName>
        <fullName evidence="23">Avirulence protein AvrBs3</fullName>
    </recommendedName>
    <alternativeName>
        <fullName evidence="23">TAL effector protein AvrBs3</fullName>
    </alternativeName>
</protein>